<feature type="chain" id="PRO_1000099341" description="Bis(5'-nucleosyl)-tetraphosphatase, symmetrical">
    <location>
        <begin position="1"/>
        <end position="295"/>
    </location>
</feature>
<feature type="region of interest" description="Disordered" evidence="2">
    <location>
        <begin position="271"/>
        <end position="295"/>
    </location>
</feature>
<feature type="compositionally biased region" description="Basic residues" evidence="2">
    <location>
        <begin position="277"/>
        <end position="295"/>
    </location>
</feature>
<dbReference type="EC" id="3.6.1.41" evidence="1"/>
<dbReference type="EMBL" id="CP001011">
    <property type="protein sequence ID" value="ACB92711.1"/>
    <property type="molecule type" value="Genomic_DNA"/>
</dbReference>
<dbReference type="RefSeq" id="WP_011098001.1">
    <property type="nucleotide sequence ID" value="NC_010577.1"/>
</dbReference>
<dbReference type="SMR" id="B2I5R6"/>
<dbReference type="KEGG" id="xfn:XfasM23_1290"/>
<dbReference type="HOGENOM" id="CLU_056184_0_0_6"/>
<dbReference type="Proteomes" id="UP000001698">
    <property type="component" value="Chromosome"/>
</dbReference>
<dbReference type="GO" id="GO:0008803">
    <property type="term" value="F:bis(5'-nucleosyl)-tetraphosphatase (symmetrical) activity"/>
    <property type="evidence" value="ECO:0007669"/>
    <property type="project" value="UniProtKB-UniRule"/>
</dbReference>
<dbReference type="CDD" id="cd07422">
    <property type="entry name" value="MPP_ApaH"/>
    <property type="match status" value="1"/>
</dbReference>
<dbReference type="Gene3D" id="3.60.21.10">
    <property type="match status" value="1"/>
</dbReference>
<dbReference type="HAMAP" id="MF_00199">
    <property type="entry name" value="ApaH"/>
    <property type="match status" value="1"/>
</dbReference>
<dbReference type="InterPro" id="IPR004617">
    <property type="entry name" value="ApaH"/>
</dbReference>
<dbReference type="InterPro" id="IPR004843">
    <property type="entry name" value="Calcineurin-like_PHP_ApaH"/>
</dbReference>
<dbReference type="InterPro" id="IPR029052">
    <property type="entry name" value="Metallo-depent_PP-like"/>
</dbReference>
<dbReference type="NCBIfam" id="TIGR00668">
    <property type="entry name" value="apaH"/>
    <property type="match status" value="1"/>
</dbReference>
<dbReference type="NCBIfam" id="NF001204">
    <property type="entry name" value="PRK00166.1"/>
    <property type="match status" value="1"/>
</dbReference>
<dbReference type="PANTHER" id="PTHR40942">
    <property type="match status" value="1"/>
</dbReference>
<dbReference type="PANTHER" id="PTHR40942:SF4">
    <property type="entry name" value="CYTOCHROME C5"/>
    <property type="match status" value="1"/>
</dbReference>
<dbReference type="Pfam" id="PF00149">
    <property type="entry name" value="Metallophos"/>
    <property type="match status" value="1"/>
</dbReference>
<dbReference type="PIRSF" id="PIRSF000903">
    <property type="entry name" value="B5n-ttraPtase_sm"/>
    <property type="match status" value="1"/>
</dbReference>
<dbReference type="SUPFAM" id="SSF56300">
    <property type="entry name" value="Metallo-dependent phosphatases"/>
    <property type="match status" value="1"/>
</dbReference>
<keyword id="KW-0378">Hydrolase</keyword>
<organism>
    <name type="scientific">Xylella fastidiosa (strain M23)</name>
    <dbReference type="NCBI Taxonomy" id="405441"/>
    <lineage>
        <taxon>Bacteria</taxon>
        <taxon>Pseudomonadati</taxon>
        <taxon>Pseudomonadota</taxon>
        <taxon>Gammaproteobacteria</taxon>
        <taxon>Lysobacterales</taxon>
        <taxon>Lysobacteraceae</taxon>
        <taxon>Xylella</taxon>
    </lineage>
</organism>
<protein>
    <recommendedName>
        <fullName evidence="1">Bis(5'-nucleosyl)-tetraphosphatase, symmetrical</fullName>
        <ecNumber evidence="1">3.6.1.41</ecNumber>
    </recommendedName>
    <alternativeName>
        <fullName evidence="1">Ap4A hydrolase</fullName>
    </alternativeName>
    <alternativeName>
        <fullName evidence="1">Diadenosine 5',5'''-P1,P4-tetraphosphate pyrophosphohydrolase</fullName>
    </alternativeName>
    <alternativeName>
        <fullName evidence="1">Diadenosine tetraphosphatase</fullName>
    </alternativeName>
</protein>
<gene>
    <name evidence="1" type="primary">apaH</name>
    <name type="ordered locus">XfasM23_1290</name>
</gene>
<accession>B2I5R6</accession>
<comment type="function">
    <text evidence="1">Hydrolyzes diadenosine 5',5'''-P1,P4-tetraphosphate to yield ADP.</text>
</comment>
<comment type="catalytic activity">
    <reaction evidence="1">
        <text>P(1),P(4)-bis(5'-adenosyl) tetraphosphate + H2O = 2 ADP + 2 H(+)</text>
        <dbReference type="Rhea" id="RHEA:24252"/>
        <dbReference type="ChEBI" id="CHEBI:15377"/>
        <dbReference type="ChEBI" id="CHEBI:15378"/>
        <dbReference type="ChEBI" id="CHEBI:58141"/>
        <dbReference type="ChEBI" id="CHEBI:456216"/>
        <dbReference type="EC" id="3.6.1.41"/>
    </reaction>
</comment>
<comment type="similarity">
    <text evidence="1">Belongs to the Ap4A hydrolase family.</text>
</comment>
<name>APAH_XYLF2</name>
<sequence>MSIWAIGDLQGCYDATQRLLENIRFDPSQDTLWFCGDLVNRGGQSLETLRLVHSLRSHSVVVLGNHDLSLLAVTVRSEEEQRKVNPDLLRIITAEDRDEILTWLRMQKLIHVDRTIGWMMVHAGLAPKWTTQMAEKLAHEVEQQLHGTDYRKLLHSMYGDKPEWSPALSGCNRSRAIINVLTRMRYCTPRGRISTEDKGTPGTQTQGMYPWFEVPGRVERDLKIVCGHWSTLGLTITQGIHAIDTGAVWGGKLTALQIDTDELRLAQVHGLSIEHPRHTHTPRRKAKKRHKRSPK</sequence>
<proteinExistence type="inferred from homology"/>
<evidence type="ECO:0000255" key="1">
    <source>
        <dbReference type="HAMAP-Rule" id="MF_00199"/>
    </source>
</evidence>
<evidence type="ECO:0000256" key="2">
    <source>
        <dbReference type="SAM" id="MobiDB-lite"/>
    </source>
</evidence>
<reference key="1">
    <citation type="journal article" date="2010" name="J. Bacteriol.">
        <title>Whole genome sequences of two Xylella fastidiosa strains (M12 and M23) causing almond leaf scorch disease in California.</title>
        <authorList>
            <person name="Chen J."/>
            <person name="Xie G."/>
            <person name="Han S."/>
            <person name="Chertkov O."/>
            <person name="Sims D."/>
            <person name="Civerolo E.L."/>
        </authorList>
    </citation>
    <scope>NUCLEOTIDE SEQUENCE [LARGE SCALE GENOMIC DNA]</scope>
    <source>
        <strain>M23</strain>
    </source>
</reference>